<proteinExistence type="inferred from homology"/>
<comment type="function">
    <text evidence="1">Nucleoside triphosphate pyrophosphatase that hydrolyzes dTTP and UTP. May have a dual role in cell division arrest and in preventing the incorporation of modified nucleotides into cellular nucleic acids.</text>
</comment>
<comment type="catalytic activity">
    <reaction evidence="1">
        <text>dTTP + H2O = dTMP + diphosphate + H(+)</text>
        <dbReference type="Rhea" id="RHEA:28534"/>
        <dbReference type="ChEBI" id="CHEBI:15377"/>
        <dbReference type="ChEBI" id="CHEBI:15378"/>
        <dbReference type="ChEBI" id="CHEBI:33019"/>
        <dbReference type="ChEBI" id="CHEBI:37568"/>
        <dbReference type="ChEBI" id="CHEBI:63528"/>
        <dbReference type="EC" id="3.6.1.9"/>
    </reaction>
</comment>
<comment type="catalytic activity">
    <reaction evidence="1">
        <text>UTP + H2O = UMP + diphosphate + H(+)</text>
        <dbReference type="Rhea" id="RHEA:29395"/>
        <dbReference type="ChEBI" id="CHEBI:15377"/>
        <dbReference type="ChEBI" id="CHEBI:15378"/>
        <dbReference type="ChEBI" id="CHEBI:33019"/>
        <dbReference type="ChEBI" id="CHEBI:46398"/>
        <dbReference type="ChEBI" id="CHEBI:57865"/>
        <dbReference type="EC" id="3.6.1.9"/>
    </reaction>
</comment>
<comment type="cofactor">
    <cofactor evidence="1">
        <name>a divalent metal cation</name>
        <dbReference type="ChEBI" id="CHEBI:60240"/>
    </cofactor>
</comment>
<comment type="subcellular location">
    <subcellularLocation>
        <location evidence="1">Cytoplasm</location>
    </subcellularLocation>
</comment>
<comment type="similarity">
    <text evidence="1">Belongs to the Maf family. YhdE subfamily.</text>
</comment>
<organism>
    <name type="scientific">Christiangramia forsetii (strain DSM 17595 / CGMCC 1.15422 / KT0803)</name>
    <name type="common">Gramella forsetii</name>
    <dbReference type="NCBI Taxonomy" id="411154"/>
    <lineage>
        <taxon>Bacteria</taxon>
        <taxon>Pseudomonadati</taxon>
        <taxon>Bacteroidota</taxon>
        <taxon>Flavobacteriia</taxon>
        <taxon>Flavobacteriales</taxon>
        <taxon>Flavobacteriaceae</taxon>
        <taxon>Christiangramia</taxon>
    </lineage>
</organism>
<feature type="chain" id="PRO_1000060941" description="dTTP/UTP pyrophosphatase">
    <location>
        <begin position="1"/>
        <end position="196"/>
    </location>
</feature>
<feature type="active site" description="Proton acceptor" evidence="1">
    <location>
        <position position="77"/>
    </location>
</feature>
<feature type="site" description="Important for substrate specificity" evidence="1">
    <location>
        <position position="19"/>
    </location>
</feature>
<feature type="site" description="Important for substrate specificity" evidence="1">
    <location>
        <position position="78"/>
    </location>
</feature>
<feature type="site" description="Important for substrate specificity" evidence="1">
    <location>
        <position position="160"/>
    </location>
</feature>
<accession>A0M2D8</accession>
<reference key="1">
    <citation type="journal article" date="2006" name="Environ. Microbiol.">
        <title>Whole genome analysis of the marine Bacteroidetes'Gramella forsetii' reveals adaptations to degradation of polymeric organic matter.</title>
        <authorList>
            <person name="Bauer M."/>
            <person name="Kube M."/>
            <person name="Teeling H."/>
            <person name="Richter M."/>
            <person name="Lombardot T."/>
            <person name="Allers E."/>
            <person name="Wuerdemann C.A."/>
            <person name="Quast C."/>
            <person name="Kuhl H."/>
            <person name="Knaust F."/>
            <person name="Woebken D."/>
            <person name="Bischof K."/>
            <person name="Mussmann M."/>
            <person name="Choudhuri J.V."/>
            <person name="Meyer F."/>
            <person name="Reinhardt R."/>
            <person name="Amann R.I."/>
            <person name="Gloeckner F.O."/>
        </authorList>
    </citation>
    <scope>NUCLEOTIDE SEQUENCE [LARGE SCALE GENOMIC DNA]</scope>
    <source>
        <strain>DSM 17595 / CGMCC 1.15422 / KT0803</strain>
    </source>
</reference>
<protein>
    <recommendedName>
        <fullName evidence="1">dTTP/UTP pyrophosphatase</fullName>
        <shortName evidence="1">dTTPase/UTPase</shortName>
        <ecNumber evidence="1">3.6.1.9</ecNumber>
    </recommendedName>
    <alternativeName>
        <fullName evidence="1">Nucleoside triphosphate pyrophosphatase</fullName>
    </alternativeName>
    <alternativeName>
        <fullName evidence="1">Nucleotide pyrophosphatase</fullName>
        <shortName evidence="1">Nucleotide PPase</shortName>
    </alternativeName>
</protein>
<sequence>MLQELLKNHEIILASGSPRRQKFFQDLEIPVKIDVRPVDEVFSEHLKKEEITDFLSVLKSEVFLNDLKENQILITSDTIVYNEAKALGKPKDHAEAVKMISSLSGKNHEVITSVCFTSKNYQKVLNHSTRVYFSELTEKEIEYYVTNFKPFDKAGGYAIQEWIGLIGIKKIEGSYFNVVGLPTHEVYKTLKEMLNS</sequence>
<keyword id="KW-0963">Cytoplasm</keyword>
<keyword id="KW-0378">Hydrolase</keyword>
<keyword id="KW-0546">Nucleotide metabolism</keyword>
<dbReference type="EC" id="3.6.1.9" evidence="1"/>
<dbReference type="EMBL" id="CU207366">
    <property type="protein sequence ID" value="CAL66783.1"/>
    <property type="molecule type" value="Genomic_DNA"/>
</dbReference>
<dbReference type="RefSeq" id="WP_011709691.1">
    <property type="nucleotide sequence ID" value="NC_008571.1"/>
</dbReference>
<dbReference type="SMR" id="A0M2D8"/>
<dbReference type="STRING" id="411154.GFO_1813"/>
<dbReference type="KEGG" id="gfo:GFO_1813"/>
<dbReference type="eggNOG" id="COG0424">
    <property type="taxonomic scope" value="Bacteria"/>
</dbReference>
<dbReference type="HOGENOM" id="CLU_040416_0_0_10"/>
<dbReference type="OrthoDB" id="9807767at2"/>
<dbReference type="Proteomes" id="UP000000755">
    <property type="component" value="Chromosome"/>
</dbReference>
<dbReference type="GO" id="GO:0005737">
    <property type="term" value="C:cytoplasm"/>
    <property type="evidence" value="ECO:0007669"/>
    <property type="project" value="UniProtKB-SubCell"/>
</dbReference>
<dbReference type="GO" id="GO:0036218">
    <property type="term" value="F:dTTP diphosphatase activity"/>
    <property type="evidence" value="ECO:0007669"/>
    <property type="project" value="RHEA"/>
</dbReference>
<dbReference type="GO" id="GO:0036221">
    <property type="term" value="F:UTP diphosphatase activity"/>
    <property type="evidence" value="ECO:0007669"/>
    <property type="project" value="RHEA"/>
</dbReference>
<dbReference type="GO" id="GO:0009117">
    <property type="term" value="P:nucleotide metabolic process"/>
    <property type="evidence" value="ECO:0007669"/>
    <property type="project" value="UniProtKB-KW"/>
</dbReference>
<dbReference type="CDD" id="cd00555">
    <property type="entry name" value="Maf"/>
    <property type="match status" value="1"/>
</dbReference>
<dbReference type="Gene3D" id="3.90.950.10">
    <property type="match status" value="1"/>
</dbReference>
<dbReference type="HAMAP" id="MF_00528">
    <property type="entry name" value="Maf"/>
    <property type="match status" value="1"/>
</dbReference>
<dbReference type="InterPro" id="IPR029001">
    <property type="entry name" value="ITPase-like_fam"/>
</dbReference>
<dbReference type="InterPro" id="IPR003697">
    <property type="entry name" value="Maf-like"/>
</dbReference>
<dbReference type="NCBIfam" id="TIGR00172">
    <property type="entry name" value="maf"/>
    <property type="match status" value="1"/>
</dbReference>
<dbReference type="PANTHER" id="PTHR43213">
    <property type="entry name" value="BIFUNCTIONAL DTTP/UTP PYROPHOSPHATASE/METHYLTRANSFERASE PROTEIN-RELATED"/>
    <property type="match status" value="1"/>
</dbReference>
<dbReference type="PANTHER" id="PTHR43213:SF5">
    <property type="entry name" value="BIFUNCTIONAL DTTP_UTP PYROPHOSPHATASE_METHYLTRANSFERASE PROTEIN-RELATED"/>
    <property type="match status" value="1"/>
</dbReference>
<dbReference type="Pfam" id="PF02545">
    <property type="entry name" value="Maf"/>
    <property type="match status" value="1"/>
</dbReference>
<dbReference type="PIRSF" id="PIRSF006305">
    <property type="entry name" value="Maf"/>
    <property type="match status" value="1"/>
</dbReference>
<dbReference type="SUPFAM" id="SSF52972">
    <property type="entry name" value="ITPase-like"/>
    <property type="match status" value="1"/>
</dbReference>
<name>NTPPA_CHRFK</name>
<evidence type="ECO:0000255" key="1">
    <source>
        <dbReference type="HAMAP-Rule" id="MF_00528"/>
    </source>
</evidence>
<gene>
    <name type="ordered locus">GFO_1813</name>
</gene>